<feature type="chain" id="PRO_1000119609" description="Ferrochelatase">
    <location>
        <begin position="1"/>
        <end position="320"/>
    </location>
</feature>
<feature type="binding site" evidence="1">
    <location>
        <position position="194"/>
    </location>
    <ligand>
        <name>Fe cation</name>
        <dbReference type="ChEBI" id="CHEBI:24875"/>
    </ligand>
</feature>
<feature type="binding site" evidence="1">
    <location>
        <position position="275"/>
    </location>
    <ligand>
        <name>Fe cation</name>
        <dbReference type="ChEBI" id="CHEBI:24875"/>
    </ligand>
</feature>
<sequence length="320" mass="35870">MRQTKTGILLANLGTPDAPTPEAVKRYLKQFLSDRRVVDTSRLLWWPLLRGVILPLRSPRVAKLYASVWMEGGSPLMVYSRQQQQALAQRLPETPVALGMSYGSPSLESAVDELLAEHVDHIVVLPLYPQYSCSTVGAVWDELARILARKRSIPGISFIRDYADNHDYINALANSVRASFAKHGEPDLLLLSYHGIPQRYADEGDDYPQRCRTTTRELASALGMAPEKVMMTFQSRFGREPWLMPYTDETLKMLGEKGVGHIQVMCPGFAADCLETLEEIAEQNREVFLGAGGKKYEYIPALNATPEHIEMMANLVAAYR</sequence>
<proteinExistence type="inferred from homology"/>
<keyword id="KW-0963">Cytoplasm</keyword>
<keyword id="KW-0350">Heme biosynthesis</keyword>
<keyword id="KW-0408">Iron</keyword>
<keyword id="KW-0456">Lyase</keyword>
<keyword id="KW-0479">Metal-binding</keyword>
<keyword id="KW-0627">Porphyrin biosynthesis</keyword>
<evidence type="ECO:0000255" key="1">
    <source>
        <dbReference type="HAMAP-Rule" id="MF_00323"/>
    </source>
</evidence>
<reference key="1">
    <citation type="journal article" date="2009" name="PLoS Genet.">
        <title>Organised genome dynamics in the Escherichia coli species results in highly diverse adaptive paths.</title>
        <authorList>
            <person name="Touchon M."/>
            <person name="Hoede C."/>
            <person name="Tenaillon O."/>
            <person name="Barbe V."/>
            <person name="Baeriswyl S."/>
            <person name="Bidet P."/>
            <person name="Bingen E."/>
            <person name="Bonacorsi S."/>
            <person name="Bouchier C."/>
            <person name="Bouvet O."/>
            <person name="Calteau A."/>
            <person name="Chiapello H."/>
            <person name="Clermont O."/>
            <person name="Cruveiller S."/>
            <person name="Danchin A."/>
            <person name="Diard M."/>
            <person name="Dossat C."/>
            <person name="Karoui M.E."/>
            <person name="Frapy E."/>
            <person name="Garry L."/>
            <person name="Ghigo J.M."/>
            <person name="Gilles A.M."/>
            <person name="Johnson J."/>
            <person name="Le Bouguenec C."/>
            <person name="Lescat M."/>
            <person name="Mangenot S."/>
            <person name="Martinez-Jehanne V."/>
            <person name="Matic I."/>
            <person name="Nassif X."/>
            <person name="Oztas S."/>
            <person name="Petit M.A."/>
            <person name="Pichon C."/>
            <person name="Rouy Z."/>
            <person name="Ruf C.S."/>
            <person name="Schneider D."/>
            <person name="Tourret J."/>
            <person name="Vacherie B."/>
            <person name="Vallenet D."/>
            <person name="Medigue C."/>
            <person name="Rocha E.P.C."/>
            <person name="Denamur E."/>
        </authorList>
    </citation>
    <scope>NUCLEOTIDE SEQUENCE [LARGE SCALE GENOMIC DNA]</scope>
    <source>
        <strain>UMN026 / ExPEC</strain>
    </source>
</reference>
<comment type="function">
    <text evidence="1">Catalyzes the ferrous insertion into protoporphyrin IX.</text>
</comment>
<comment type="catalytic activity">
    <reaction evidence="1">
        <text>heme b + 2 H(+) = protoporphyrin IX + Fe(2+)</text>
        <dbReference type="Rhea" id="RHEA:22584"/>
        <dbReference type="ChEBI" id="CHEBI:15378"/>
        <dbReference type="ChEBI" id="CHEBI:29033"/>
        <dbReference type="ChEBI" id="CHEBI:57306"/>
        <dbReference type="ChEBI" id="CHEBI:60344"/>
        <dbReference type="EC" id="4.98.1.1"/>
    </reaction>
</comment>
<comment type="pathway">
    <text evidence="1">Porphyrin-containing compound metabolism; protoheme biosynthesis; protoheme from protoporphyrin-IX: step 1/1.</text>
</comment>
<comment type="subunit">
    <text evidence="1">Monomer.</text>
</comment>
<comment type="subcellular location">
    <subcellularLocation>
        <location evidence="1">Cytoplasm</location>
    </subcellularLocation>
</comment>
<comment type="similarity">
    <text evidence="1">Belongs to the ferrochelatase family.</text>
</comment>
<accession>B7N928</accession>
<dbReference type="EC" id="4.98.1.1" evidence="1"/>
<dbReference type="EMBL" id="CU928163">
    <property type="protein sequence ID" value="CAR11729.1"/>
    <property type="molecule type" value="Genomic_DNA"/>
</dbReference>
<dbReference type="RefSeq" id="WP_001250117.1">
    <property type="nucleotide sequence ID" value="NC_011751.1"/>
</dbReference>
<dbReference type="RefSeq" id="YP_002411277.1">
    <property type="nucleotide sequence ID" value="NC_011751.1"/>
</dbReference>
<dbReference type="SMR" id="B7N928"/>
<dbReference type="STRING" id="585056.ECUMN_0514"/>
<dbReference type="KEGG" id="eum:ECUMN_0514"/>
<dbReference type="PATRIC" id="fig|585056.7.peg.721"/>
<dbReference type="HOGENOM" id="CLU_018884_0_0_6"/>
<dbReference type="UniPathway" id="UPA00252">
    <property type="reaction ID" value="UER00325"/>
</dbReference>
<dbReference type="Proteomes" id="UP000007097">
    <property type="component" value="Chromosome"/>
</dbReference>
<dbReference type="GO" id="GO:0005737">
    <property type="term" value="C:cytoplasm"/>
    <property type="evidence" value="ECO:0007669"/>
    <property type="project" value="UniProtKB-SubCell"/>
</dbReference>
<dbReference type="GO" id="GO:0004325">
    <property type="term" value="F:ferrochelatase activity"/>
    <property type="evidence" value="ECO:0007669"/>
    <property type="project" value="UniProtKB-UniRule"/>
</dbReference>
<dbReference type="GO" id="GO:0046872">
    <property type="term" value="F:metal ion binding"/>
    <property type="evidence" value="ECO:0007669"/>
    <property type="project" value="UniProtKB-KW"/>
</dbReference>
<dbReference type="GO" id="GO:0006783">
    <property type="term" value="P:heme biosynthetic process"/>
    <property type="evidence" value="ECO:0007669"/>
    <property type="project" value="UniProtKB-UniRule"/>
</dbReference>
<dbReference type="CDD" id="cd00419">
    <property type="entry name" value="Ferrochelatase_C"/>
    <property type="match status" value="1"/>
</dbReference>
<dbReference type="CDD" id="cd03411">
    <property type="entry name" value="Ferrochelatase_N"/>
    <property type="match status" value="1"/>
</dbReference>
<dbReference type="FunFam" id="3.40.50.1400:FF:000004">
    <property type="entry name" value="Ferrochelatase"/>
    <property type="match status" value="1"/>
</dbReference>
<dbReference type="Gene3D" id="3.40.50.1400">
    <property type="match status" value="2"/>
</dbReference>
<dbReference type="HAMAP" id="MF_00323">
    <property type="entry name" value="Ferrochelatase"/>
    <property type="match status" value="1"/>
</dbReference>
<dbReference type="InterPro" id="IPR001015">
    <property type="entry name" value="Ferrochelatase"/>
</dbReference>
<dbReference type="InterPro" id="IPR019772">
    <property type="entry name" value="Ferrochelatase_AS"/>
</dbReference>
<dbReference type="InterPro" id="IPR033644">
    <property type="entry name" value="Ferrochelatase_C"/>
</dbReference>
<dbReference type="InterPro" id="IPR033659">
    <property type="entry name" value="Ferrochelatase_N"/>
</dbReference>
<dbReference type="NCBIfam" id="TIGR00109">
    <property type="entry name" value="hemH"/>
    <property type="match status" value="1"/>
</dbReference>
<dbReference type="PANTHER" id="PTHR11108">
    <property type="entry name" value="FERROCHELATASE"/>
    <property type="match status" value="1"/>
</dbReference>
<dbReference type="PANTHER" id="PTHR11108:SF1">
    <property type="entry name" value="FERROCHELATASE, MITOCHONDRIAL"/>
    <property type="match status" value="1"/>
</dbReference>
<dbReference type="Pfam" id="PF00762">
    <property type="entry name" value="Ferrochelatase"/>
    <property type="match status" value="1"/>
</dbReference>
<dbReference type="SUPFAM" id="SSF53800">
    <property type="entry name" value="Chelatase"/>
    <property type="match status" value="1"/>
</dbReference>
<dbReference type="PROSITE" id="PS00534">
    <property type="entry name" value="FERROCHELATASE"/>
    <property type="match status" value="1"/>
</dbReference>
<gene>
    <name evidence="1" type="primary">hemH</name>
    <name type="ordered locus">ECUMN_0514</name>
</gene>
<name>HEMH_ECOLU</name>
<organism>
    <name type="scientific">Escherichia coli O17:K52:H18 (strain UMN026 / ExPEC)</name>
    <dbReference type="NCBI Taxonomy" id="585056"/>
    <lineage>
        <taxon>Bacteria</taxon>
        <taxon>Pseudomonadati</taxon>
        <taxon>Pseudomonadota</taxon>
        <taxon>Gammaproteobacteria</taxon>
        <taxon>Enterobacterales</taxon>
        <taxon>Enterobacteriaceae</taxon>
        <taxon>Escherichia</taxon>
    </lineage>
</organism>
<protein>
    <recommendedName>
        <fullName evidence="1">Ferrochelatase</fullName>
        <ecNumber evidence="1">4.98.1.1</ecNumber>
    </recommendedName>
    <alternativeName>
        <fullName evidence="1">Heme synthase</fullName>
    </alternativeName>
    <alternativeName>
        <fullName evidence="1">Protoheme ferro-lyase</fullName>
    </alternativeName>
</protein>